<sequence length="348" mass="38472">MADIYRFPKFSYEDNGTVEPLPLRTGPDKKAIPHIRIIKVGVPPKHGVRYLDLLLLGFFETPKQTTNLGSVSDLTEPTSYSICGSGSLPIGVAKYYGTDQELLKACTDLRITVRRTVRAGEMIVYMVGSIGAPLLPWSGRLRQGMIFNANKVALAPQCLPVDKDIRLRVVFVNGTSLGAITIAKIPKTLADLALPNSISVNLLVTLKTGISTEQKGVLPVLDDQGEKKLNFMVHLGLIRRKVGKIYSVEYCKSKIERMRLIFSLGLTGGISFHVQVTGTLSKTFMSQLAWKRAVCFPLMDVNPHMNMVIWAASVEITGVDAVFQPAIPRDFRYYPNVVAKNIGRIRKL</sequence>
<feature type="chain" id="PRO_0000142772" description="Matrix protein">
    <location>
        <begin position="1"/>
        <end position="348"/>
    </location>
</feature>
<feature type="short sequence motif" description="YLDL motif" evidence="1">
    <location>
        <begin position="50"/>
        <end position="53"/>
    </location>
</feature>
<feature type="modified residue" description="Phosphoserine; by host" evidence="1">
    <location>
        <position position="70"/>
    </location>
</feature>
<protein>
    <recommendedName>
        <fullName>Matrix protein</fullName>
        <shortName>M protein</shortName>
    </recommendedName>
</protein>
<accession>Q88428</accession>
<organism>
    <name type="scientific">Sendai virus (strain Enders)</name>
    <name type="common">SeV</name>
    <dbReference type="NCBI Taxonomy" id="11194"/>
    <lineage>
        <taxon>Viruses</taxon>
        <taxon>Riboviria</taxon>
        <taxon>Orthornavirae</taxon>
        <taxon>Negarnaviricota</taxon>
        <taxon>Haploviricotina</taxon>
        <taxon>Monjiviricetes</taxon>
        <taxon>Mononegavirales</taxon>
        <taxon>Paramyxoviridae</taxon>
        <taxon>Feraresvirinae</taxon>
        <taxon>Respirovirus</taxon>
        <taxon>Respirovirus muris</taxon>
    </lineage>
</organism>
<comment type="function">
    <text evidence="1">Plays a crucial role in virion assembly and budding. Forms a shell at the inner face of the plasma membrane and concentrates the HN and F glycoproteins. Acts as a negative regulator for transcription and replication by sticking to the nucleocapsid. This effect might be regulated by the cytoplasmic interaction with tubulin that dissociates the M protein from the nucleocapsid (By similarity).</text>
</comment>
<comment type="subunit">
    <text evidence="2">Homomultimer. Binds to the cytoplasmic regions of F and HN proteins. Interacts with nucleocapsid. Interacts with human alpha-tubulin and beta-tubulin. Interacts with host ANP32B.</text>
</comment>
<comment type="subcellular location">
    <subcellularLocation>
        <location evidence="3">Virion</location>
    </subcellularLocation>
    <subcellularLocation>
        <location evidence="1">Host cytoplasm</location>
    </subcellularLocation>
    <subcellularLocation>
        <location evidence="1">Host cell membrane</location>
        <topology evidence="1">Peripheral membrane protein</topology>
        <orientation evidence="1">Cytoplasmic side</orientation>
    </subcellularLocation>
    <text evidence="1">During bud formation, associates at the inner side of the plasma membrane of infected cells.</text>
</comment>
<comment type="domain">
    <text evidence="1">Late-budding domains (L domains) are short sequence motifs essential for viral particle budding. They recruit proteins of the host ESCRT machinery (Endosomal Sorting Complex Required for Transport) or ESCRT-associated proteins. The matrix protein contains one L domain: a YLDL motif (By similarity).</text>
</comment>
<comment type="PTM">
    <text evidence="1">A large portion is phosphorylated in the cytoplasm, but not in virion. However, this phosphorylation is not essential for virus replication (By similarity).</text>
</comment>
<comment type="similarity">
    <text evidence="3">Belongs to the morbillivirus/respirovirus/rubulavirus M protein family.</text>
</comment>
<proteinExistence type="inferred from homology"/>
<gene>
    <name type="primary">M</name>
</gene>
<organismHost>
    <name type="scientific">Cavia cutleri</name>
    <name type="common">Guinea pig</name>
    <dbReference type="NCBI Taxonomy" id="10144"/>
</organismHost>
<organismHost>
    <name type="scientific">Cricetidae sp.</name>
    <name type="common">Hamster</name>
    <dbReference type="NCBI Taxonomy" id="36483"/>
</organismHost>
<organismHost>
    <name type="scientific">Mus musculus</name>
    <name type="common">Mouse</name>
    <dbReference type="NCBI Taxonomy" id="10090"/>
</organismHost>
<organismHost>
    <name type="scientific">Rattus norvegicus</name>
    <name type="common">Rat</name>
    <dbReference type="NCBI Taxonomy" id="10116"/>
</organismHost>
<name>MATRX_SENDE</name>
<dbReference type="EMBL" id="U31956">
    <property type="protein sequence ID" value="AAB60595.1"/>
    <property type="molecule type" value="Genomic_RNA"/>
</dbReference>
<dbReference type="SMR" id="Q88428"/>
<dbReference type="GO" id="GO:0030430">
    <property type="term" value="C:host cell cytoplasm"/>
    <property type="evidence" value="ECO:0007669"/>
    <property type="project" value="UniProtKB-SubCell"/>
</dbReference>
<dbReference type="GO" id="GO:0020002">
    <property type="term" value="C:host cell plasma membrane"/>
    <property type="evidence" value="ECO:0007669"/>
    <property type="project" value="UniProtKB-SubCell"/>
</dbReference>
<dbReference type="GO" id="GO:0016020">
    <property type="term" value="C:membrane"/>
    <property type="evidence" value="ECO:0007669"/>
    <property type="project" value="UniProtKB-KW"/>
</dbReference>
<dbReference type="GO" id="GO:0044423">
    <property type="term" value="C:virion component"/>
    <property type="evidence" value="ECO:0007669"/>
    <property type="project" value="UniProtKB-KW"/>
</dbReference>
<dbReference type="GO" id="GO:0039660">
    <property type="term" value="F:structural constituent of virion"/>
    <property type="evidence" value="ECO:0007669"/>
    <property type="project" value="UniProtKB-KW"/>
</dbReference>
<dbReference type="GO" id="GO:0039702">
    <property type="term" value="P:viral budding via host ESCRT complex"/>
    <property type="evidence" value="ECO:0007669"/>
    <property type="project" value="UniProtKB-KW"/>
</dbReference>
<dbReference type="Gene3D" id="2.70.20.60">
    <property type="entry name" value="Viral matrix protein, C-terminal domain"/>
    <property type="match status" value="1"/>
</dbReference>
<dbReference type="Gene3D" id="2.70.20.50">
    <property type="entry name" value="Viral matrix protein, N-terminal domain"/>
    <property type="match status" value="1"/>
</dbReference>
<dbReference type="InterPro" id="IPR042539">
    <property type="entry name" value="Matrix_C"/>
</dbReference>
<dbReference type="InterPro" id="IPR042540">
    <property type="entry name" value="Matrix_N"/>
</dbReference>
<dbReference type="InterPro" id="IPR055413">
    <property type="entry name" value="Matrix_Paramyxo_C"/>
</dbReference>
<dbReference type="InterPro" id="IPR000982">
    <property type="entry name" value="Matrix_Paramyxo_N"/>
</dbReference>
<dbReference type="Pfam" id="PF23765">
    <property type="entry name" value="Matrix_Paramyxo_C"/>
    <property type="match status" value="1"/>
</dbReference>
<dbReference type="Pfam" id="PF00661">
    <property type="entry name" value="Matrix_Paramyxo_N"/>
    <property type="match status" value="1"/>
</dbReference>
<keyword id="KW-1032">Host cell membrane</keyword>
<keyword id="KW-1035">Host cytoplasm</keyword>
<keyword id="KW-1043">Host membrane</keyword>
<keyword id="KW-0945">Host-virus interaction</keyword>
<keyword id="KW-0472">Membrane</keyword>
<keyword id="KW-0597">Phosphoprotein</keyword>
<keyword id="KW-1198">Viral budding</keyword>
<keyword id="KW-1187">Viral budding via the host ESCRT complexes</keyword>
<keyword id="KW-0468">Viral matrix protein</keyword>
<keyword id="KW-1188">Viral release from host cell</keyword>
<keyword id="KW-0946">Virion</keyword>
<reference key="1">
    <citation type="journal article" date="1995" name="J. Virol.">
        <title>Binding motifs predict major histocompatibility complex class II-restricted epitopes in the Sendai virus M protein.</title>
        <authorList>
            <person name="Cole G.A."/>
            <person name="Tao T."/>
            <person name="Hogg T.L."/>
            <person name="Ryan K.W."/>
            <person name="Woodland D.L."/>
        </authorList>
    </citation>
    <scope>NUCLEOTIDE SEQUENCE [GENOMIC RNA]</scope>
</reference>
<evidence type="ECO:0000250" key="1"/>
<evidence type="ECO:0000250" key="2">
    <source>
        <dbReference type="UniProtKB" id="P06446"/>
    </source>
</evidence>
<evidence type="ECO:0000305" key="3"/>